<organism>
    <name type="scientific">Bacillus velezensis (strain DSM 23117 / BGSC 10A6 / LMG 26770 / FZB42)</name>
    <name type="common">Bacillus amyloliquefaciens subsp. plantarum</name>
    <dbReference type="NCBI Taxonomy" id="326423"/>
    <lineage>
        <taxon>Bacteria</taxon>
        <taxon>Bacillati</taxon>
        <taxon>Bacillota</taxon>
        <taxon>Bacilli</taxon>
        <taxon>Bacillales</taxon>
        <taxon>Bacillaceae</taxon>
        <taxon>Bacillus</taxon>
        <taxon>Bacillus amyloliquefaciens group</taxon>
    </lineage>
</organism>
<feature type="chain" id="PRO_1000002208" description="Acetate kinase">
    <location>
        <begin position="1"/>
        <end position="395"/>
    </location>
</feature>
<feature type="active site" description="Proton donor/acceptor" evidence="1">
    <location>
        <position position="146"/>
    </location>
</feature>
<feature type="binding site" evidence="1">
    <location>
        <position position="8"/>
    </location>
    <ligand>
        <name>Mg(2+)</name>
        <dbReference type="ChEBI" id="CHEBI:18420"/>
    </ligand>
</feature>
<feature type="binding site" evidence="1">
    <location>
        <position position="15"/>
    </location>
    <ligand>
        <name>ATP</name>
        <dbReference type="ChEBI" id="CHEBI:30616"/>
    </ligand>
</feature>
<feature type="binding site" evidence="1">
    <location>
        <position position="89"/>
    </location>
    <ligand>
        <name>substrate</name>
    </ligand>
</feature>
<feature type="binding site" evidence="1">
    <location>
        <begin position="206"/>
        <end position="210"/>
    </location>
    <ligand>
        <name>ATP</name>
        <dbReference type="ChEBI" id="CHEBI:30616"/>
    </ligand>
</feature>
<feature type="binding site" evidence="1">
    <location>
        <begin position="281"/>
        <end position="283"/>
    </location>
    <ligand>
        <name>ATP</name>
        <dbReference type="ChEBI" id="CHEBI:30616"/>
    </ligand>
</feature>
<feature type="binding site" evidence="1">
    <location>
        <begin position="329"/>
        <end position="333"/>
    </location>
    <ligand>
        <name>ATP</name>
        <dbReference type="ChEBI" id="CHEBI:30616"/>
    </ligand>
</feature>
<feature type="binding site" evidence="1">
    <location>
        <position position="382"/>
    </location>
    <ligand>
        <name>Mg(2+)</name>
        <dbReference type="ChEBI" id="CHEBI:18420"/>
    </ligand>
</feature>
<feature type="site" description="Transition state stabilizer" evidence="1">
    <location>
        <position position="178"/>
    </location>
</feature>
<feature type="site" description="Transition state stabilizer" evidence="1">
    <location>
        <position position="239"/>
    </location>
</feature>
<comment type="function">
    <text evidence="1">Catalyzes the formation of acetyl phosphate from acetate and ATP. Can also catalyze the reverse reaction.</text>
</comment>
<comment type="catalytic activity">
    <reaction evidence="1">
        <text>acetate + ATP = acetyl phosphate + ADP</text>
        <dbReference type="Rhea" id="RHEA:11352"/>
        <dbReference type="ChEBI" id="CHEBI:22191"/>
        <dbReference type="ChEBI" id="CHEBI:30089"/>
        <dbReference type="ChEBI" id="CHEBI:30616"/>
        <dbReference type="ChEBI" id="CHEBI:456216"/>
        <dbReference type="EC" id="2.7.2.1"/>
    </reaction>
</comment>
<comment type="cofactor">
    <cofactor evidence="1">
        <name>Mg(2+)</name>
        <dbReference type="ChEBI" id="CHEBI:18420"/>
    </cofactor>
    <cofactor evidence="1">
        <name>Mn(2+)</name>
        <dbReference type="ChEBI" id="CHEBI:29035"/>
    </cofactor>
    <text evidence="1">Mg(2+). Can also accept Mn(2+).</text>
</comment>
<comment type="pathway">
    <text evidence="1">Metabolic intermediate biosynthesis; acetyl-CoA biosynthesis; acetyl-CoA from acetate: step 1/2.</text>
</comment>
<comment type="subunit">
    <text evidence="1">Homodimer.</text>
</comment>
<comment type="subcellular location">
    <subcellularLocation>
        <location evidence="1">Cytoplasm</location>
    </subcellularLocation>
</comment>
<comment type="similarity">
    <text evidence="1">Belongs to the acetokinase family.</text>
</comment>
<sequence length="395" mass="43275">MSKIIAINAGSSSLKFQLFEMPSEKVLTKGLVERIGIADSVFTISVNGEKNTEVTDIPDHAVAVKMLLHKLTEFGIIKDLNEIDGIGHRVVHGGEKFSDSVLLTDETIREIEEISELAPLHNPANIVGIKAFKEVLPNVPAVAVFDTAFHQTMPEQSYLYSLPYEYYEKYGIRKYGFHGTSHKYVTQRAAELLGRPLEDLRLISCHLGNGASIAAVEGGKSIDTSMGFTPLAGVAMGTRSGNIDPALIPYIMEKTDQTADEVLNTLNKKSGLLGVSGFSSDLRDIVEASKEGNERAETALEVFASRIHKYIGSYAARMSGVDAIIFTAGIGENSVEVRERVLRGLEFMGVYWDPALNNVRGEEAFISYPHSPVKVMIIPTDEEVMIARDVVRLAQ</sequence>
<evidence type="ECO:0000255" key="1">
    <source>
        <dbReference type="HAMAP-Rule" id="MF_00020"/>
    </source>
</evidence>
<name>ACKA_BACVZ</name>
<proteinExistence type="inferred from homology"/>
<keyword id="KW-0067">ATP-binding</keyword>
<keyword id="KW-0963">Cytoplasm</keyword>
<keyword id="KW-0418">Kinase</keyword>
<keyword id="KW-0460">Magnesium</keyword>
<keyword id="KW-0479">Metal-binding</keyword>
<keyword id="KW-0547">Nucleotide-binding</keyword>
<keyword id="KW-0808">Transferase</keyword>
<accession>A7Z7M2</accession>
<reference key="1">
    <citation type="journal article" date="2007" name="Nat. Biotechnol.">
        <title>Comparative analysis of the complete genome sequence of the plant growth-promoting bacterium Bacillus amyloliquefaciens FZB42.</title>
        <authorList>
            <person name="Chen X.H."/>
            <person name="Koumoutsi A."/>
            <person name="Scholz R."/>
            <person name="Eisenreich A."/>
            <person name="Schneider K."/>
            <person name="Heinemeyer I."/>
            <person name="Morgenstern B."/>
            <person name="Voss B."/>
            <person name="Hess W.R."/>
            <person name="Reva O."/>
            <person name="Junge H."/>
            <person name="Voigt B."/>
            <person name="Jungblut P.R."/>
            <person name="Vater J."/>
            <person name="Suessmuth R."/>
            <person name="Liesegang H."/>
            <person name="Strittmatter A."/>
            <person name="Gottschalk G."/>
            <person name="Borriss R."/>
        </authorList>
    </citation>
    <scope>NUCLEOTIDE SEQUENCE [LARGE SCALE GENOMIC DNA]</scope>
    <source>
        <strain>DSM 23117 / BGSC 10A6 / LMG 26770 / FZB42</strain>
    </source>
</reference>
<protein>
    <recommendedName>
        <fullName evidence="1">Acetate kinase</fullName>
        <ecNumber evidence="1">2.7.2.1</ecNumber>
    </recommendedName>
    <alternativeName>
        <fullName evidence="1">Acetokinase</fullName>
    </alternativeName>
</protein>
<dbReference type="EC" id="2.7.2.1" evidence="1"/>
<dbReference type="EMBL" id="CP000560">
    <property type="protein sequence ID" value="ABS74998.1"/>
    <property type="molecule type" value="Genomic_DNA"/>
</dbReference>
<dbReference type="RefSeq" id="WP_007408053.1">
    <property type="nucleotide sequence ID" value="NC_009725.2"/>
</dbReference>
<dbReference type="SMR" id="A7Z7M2"/>
<dbReference type="GeneID" id="93081782"/>
<dbReference type="KEGG" id="bay:RBAM_026400"/>
<dbReference type="HOGENOM" id="CLU_020352_0_1_9"/>
<dbReference type="UniPathway" id="UPA00340">
    <property type="reaction ID" value="UER00458"/>
</dbReference>
<dbReference type="Proteomes" id="UP000001120">
    <property type="component" value="Chromosome"/>
</dbReference>
<dbReference type="GO" id="GO:0005737">
    <property type="term" value="C:cytoplasm"/>
    <property type="evidence" value="ECO:0007669"/>
    <property type="project" value="UniProtKB-SubCell"/>
</dbReference>
<dbReference type="GO" id="GO:0008776">
    <property type="term" value="F:acetate kinase activity"/>
    <property type="evidence" value="ECO:0007669"/>
    <property type="project" value="UniProtKB-UniRule"/>
</dbReference>
<dbReference type="GO" id="GO:0005524">
    <property type="term" value="F:ATP binding"/>
    <property type="evidence" value="ECO:0007669"/>
    <property type="project" value="UniProtKB-KW"/>
</dbReference>
<dbReference type="GO" id="GO:0000287">
    <property type="term" value="F:magnesium ion binding"/>
    <property type="evidence" value="ECO:0007669"/>
    <property type="project" value="UniProtKB-UniRule"/>
</dbReference>
<dbReference type="GO" id="GO:0006083">
    <property type="term" value="P:acetate metabolic process"/>
    <property type="evidence" value="ECO:0007669"/>
    <property type="project" value="TreeGrafter"/>
</dbReference>
<dbReference type="GO" id="GO:0006085">
    <property type="term" value="P:acetyl-CoA biosynthetic process"/>
    <property type="evidence" value="ECO:0007669"/>
    <property type="project" value="UniProtKB-UniRule"/>
</dbReference>
<dbReference type="CDD" id="cd24010">
    <property type="entry name" value="ASKHA_NBD_AcK_PK"/>
    <property type="match status" value="1"/>
</dbReference>
<dbReference type="Gene3D" id="3.30.420.40">
    <property type="match status" value="2"/>
</dbReference>
<dbReference type="HAMAP" id="MF_00020">
    <property type="entry name" value="Acetate_kinase"/>
    <property type="match status" value="1"/>
</dbReference>
<dbReference type="InterPro" id="IPR004372">
    <property type="entry name" value="Ac/propionate_kinase"/>
</dbReference>
<dbReference type="InterPro" id="IPR000890">
    <property type="entry name" value="Aliphatic_acid_kin_short-chain"/>
</dbReference>
<dbReference type="InterPro" id="IPR023865">
    <property type="entry name" value="Aliphatic_acid_kinase_CS"/>
</dbReference>
<dbReference type="InterPro" id="IPR043129">
    <property type="entry name" value="ATPase_NBD"/>
</dbReference>
<dbReference type="NCBIfam" id="TIGR00016">
    <property type="entry name" value="ackA"/>
    <property type="match status" value="1"/>
</dbReference>
<dbReference type="PANTHER" id="PTHR21060">
    <property type="entry name" value="ACETATE KINASE"/>
    <property type="match status" value="1"/>
</dbReference>
<dbReference type="PANTHER" id="PTHR21060:SF15">
    <property type="entry name" value="ACETATE KINASE-RELATED"/>
    <property type="match status" value="1"/>
</dbReference>
<dbReference type="Pfam" id="PF00871">
    <property type="entry name" value="Acetate_kinase"/>
    <property type="match status" value="1"/>
</dbReference>
<dbReference type="PIRSF" id="PIRSF000722">
    <property type="entry name" value="Acetate_prop_kin"/>
    <property type="match status" value="1"/>
</dbReference>
<dbReference type="PRINTS" id="PR00471">
    <property type="entry name" value="ACETATEKNASE"/>
</dbReference>
<dbReference type="SUPFAM" id="SSF53067">
    <property type="entry name" value="Actin-like ATPase domain"/>
    <property type="match status" value="2"/>
</dbReference>
<dbReference type="PROSITE" id="PS01075">
    <property type="entry name" value="ACETATE_KINASE_1"/>
    <property type="match status" value="1"/>
</dbReference>
<dbReference type="PROSITE" id="PS01076">
    <property type="entry name" value="ACETATE_KINASE_2"/>
    <property type="match status" value="1"/>
</dbReference>
<gene>
    <name evidence="1" type="primary">ackA</name>
    <name type="ordered locus">RBAM_026400</name>
</gene>